<reference key="1">
    <citation type="submission" date="2008-03" db="EMBL/GenBank/DDBJ databases">
        <title>Complete sequence of Leptothrix cholodnii SP-6.</title>
        <authorList>
            <consortium name="US DOE Joint Genome Institute"/>
            <person name="Copeland A."/>
            <person name="Lucas S."/>
            <person name="Lapidus A."/>
            <person name="Glavina del Rio T."/>
            <person name="Dalin E."/>
            <person name="Tice H."/>
            <person name="Bruce D."/>
            <person name="Goodwin L."/>
            <person name="Pitluck S."/>
            <person name="Chertkov O."/>
            <person name="Brettin T."/>
            <person name="Detter J.C."/>
            <person name="Han C."/>
            <person name="Kuske C.R."/>
            <person name="Schmutz J."/>
            <person name="Larimer F."/>
            <person name="Land M."/>
            <person name="Hauser L."/>
            <person name="Kyrpides N."/>
            <person name="Lykidis A."/>
            <person name="Emerson D."/>
            <person name="Richardson P."/>
        </authorList>
    </citation>
    <scope>NUCLEOTIDE SEQUENCE [LARGE SCALE GENOMIC DNA]</scope>
    <source>
        <strain>ATCC 51168 / LMG 8142 / SP-6</strain>
    </source>
</reference>
<proteinExistence type="inferred from homology"/>
<sequence length="435" mass="48022">MAVTVETLDKLERRITLTLSADELKNEVESRLKKLARTTKADGFRPGKVPMSVVAQRYGYSVQYEVMNDKVGQAFAAATGEAQLRVAGTPRITEKDGSADGQVSFDATFEVYPEVTIGDLSALEVERVTTEVTDVAIDRTLDILRKQRRTFADRPQGEYAVDGDRVTIDFEGKIDGETFQGGKAEAFQFILGEGRMLEAFEKAVRGMKTGESKTFPLAFPADYHGADVAGKEADFLVTLTRIEAQNLPEVDAAFAESLGIADATVDGLRADIKKNLEREVKFRVAARNKQSVMSALEKVATFDLPKALVDNEMARLVENARADLKQRGIADADKAPIPTEMFQPQAERRVRLGLTMAELVRANALSATMEQIKAHIDEMAQSYEKPEEVVRWYFGDQQRLSEVEAVVIEANVANFVLGQAQVVDKQLPFDELMGA</sequence>
<keyword id="KW-0131">Cell cycle</keyword>
<keyword id="KW-0132">Cell division</keyword>
<keyword id="KW-0143">Chaperone</keyword>
<keyword id="KW-0963">Cytoplasm</keyword>
<keyword id="KW-0413">Isomerase</keyword>
<keyword id="KW-1185">Reference proteome</keyword>
<keyword id="KW-0697">Rotamase</keyword>
<accession>B1Y6H4</accession>
<name>TIG_LEPCP</name>
<protein>
    <recommendedName>
        <fullName evidence="1">Trigger factor</fullName>
        <shortName evidence="1">TF</shortName>
        <ecNumber evidence="1">5.2.1.8</ecNumber>
    </recommendedName>
    <alternativeName>
        <fullName evidence="1">PPIase</fullName>
    </alternativeName>
</protein>
<dbReference type="EC" id="5.2.1.8" evidence="1"/>
<dbReference type="EMBL" id="CP001013">
    <property type="protein sequence ID" value="ACB34810.1"/>
    <property type="molecule type" value="Genomic_DNA"/>
</dbReference>
<dbReference type="RefSeq" id="WP_012347566.1">
    <property type="nucleotide sequence ID" value="NC_010524.1"/>
</dbReference>
<dbReference type="SMR" id="B1Y6H4"/>
<dbReference type="STRING" id="395495.Lcho_2545"/>
<dbReference type="KEGG" id="lch:Lcho_2545"/>
<dbReference type="eggNOG" id="COG0544">
    <property type="taxonomic scope" value="Bacteria"/>
</dbReference>
<dbReference type="HOGENOM" id="CLU_033058_2_0_4"/>
<dbReference type="OrthoDB" id="9767721at2"/>
<dbReference type="Proteomes" id="UP000001693">
    <property type="component" value="Chromosome"/>
</dbReference>
<dbReference type="GO" id="GO:0005737">
    <property type="term" value="C:cytoplasm"/>
    <property type="evidence" value="ECO:0007669"/>
    <property type="project" value="UniProtKB-SubCell"/>
</dbReference>
<dbReference type="GO" id="GO:0003755">
    <property type="term" value="F:peptidyl-prolyl cis-trans isomerase activity"/>
    <property type="evidence" value="ECO:0007669"/>
    <property type="project" value="UniProtKB-UniRule"/>
</dbReference>
<dbReference type="GO" id="GO:0044183">
    <property type="term" value="F:protein folding chaperone"/>
    <property type="evidence" value="ECO:0007669"/>
    <property type="project" value="TreeGrafter"/>
</dbReference>
<dbReference type="GO" id="GO:0043022">
    <property type="term" value="F:ribosome binding"/>
    <property type="evidence" value="ECO:0007669"/>
    <property type="project" value="TreeGrafter"/>
</dbReference>
<dbReference type="GO" id="GO:0051083">
    <property type="term" value="P:'de novo' cotranslational protein folding"/>
    <property type="evidence" value="ECO:0007669"/>
    <property type="project" value="TreeGrafter"/>
</dbReference>
<dbReference type="GO" id="GO:0051301">
    <property type="term" value="P:cell division"/>
    <property type="evidence" value="ECO:0007669"/>
    <property type="project" value="UniProtKB-KW"/>
</dbReference>
<dbReference type="GO" id="GO:0061077">
    <property type="term" value="P:chaperone-mediated protein folding"/>
    <property type="evidence" value="ECO:0007669"/>
    <property type="project" value="TreeGrafter"/>
</dbReference>
<dbReference type="GO" id="GO:0015031">
    <property type="term" value="P:protein transport"/>
    <property type="evidence" value="ECO:0007669"/>
    <property type="project" value="UniProtKB-UniRule"/>
</dbReference>
<dbReference type="GO" id="GO:0043335">
    <property type="term" value="P:protein unfolding"/>
    <property type="evidence" value="ECO:0007669"/>
    <property type="project" value="TreeGrafter"/>
</dbReference>
<dbReference type="FunFam" id="3.10.50.40:FF:000001">
    <property type="entry name" value="Trigger factor"/>
    <property type="match status" value="1"/>
</dbReference>
<dbReference type="Gene3D" id="3.10.50.40">
    <property type="match status" value="1"/>
</dbReference>
<dbReference type="Gene3D" id="3.30.70.1050">
    <property type="entry name" value="Trigger factor ribosome-binding domain"/>
    <property type="match status" value="1"/>
</dbReference>
<dbReference type="Gene3D" id="1.10.3120.10">
    <property type="entry name" value="Trigger factor, C-terminal domain"/>
    <property type="match status" value="1"/>
</dbReference>
<dbReference type="HAMAP" id="MF_00303">
    <property type="entry name" value="Trigger_factor_Tig"/>
    <property type="match status" value="1"/>
</dbReference>
<dbReference type="InterPro" id="IPR046357">
    <property type="entry name" value="PPIase_dom_sf"/>
</dbReference>
<dbReference type="InterPro" id="IPR001179">
    <property type="entry name" value="PPIase_FKBP_dom"/>
</dbReference>
<dbReference type="InterPro" id="IPR005215">
    <property type="entry name" value="Trig_fac"/>
</dbReference>
<dbReference type="InterPro" id="IPR008880">
    <property type="entry name" value="Trigger_fac_C"/>
</dbReference>
<dbReference type="InterPro" id="IPR037041">
    <property type="entry name" value="Trigger_fac_C_sf"/>
</dbReference>
<dbReference type="InterPro" id="IPR008881">
    <property type="entry name" value="Trigger_fac_ribosome-bd_bac"/>
</dbReference>
<dbReference type="InterPro" id="IPR036611">
    <property type="entry name" value="Trigger_fac_ribosome-bd_sf"/>
</dbReference>
<dbReference type="InterPro" id="IPR027304">
    <property type="entry name" value="Trigger_fact/SurA_dom_sf"/>
</dbReference>
<dbReference type="NCBIfam" id="TIGR00115">
    <property type="entry name" value="tig"/>
    <property type="match status" value="1"/>
</dbReference>
<dbReference type="PANTHER" id="PTHR30560">
    <property type="entry name" value="TRIGGER FACTOR CHAPERONE AND PEPTIDYL-PROLYL CIS/TRANS ISOMERASE"/>
    <property type="match status" value="1"/>
</dbReference>
<dbReference type="PANTHER" id="PTHR30560:SF3">
    <property type="entry name" value="TRIGGER FACTOR-LIKE PROTEIN TIG, CHLOROPLASTIC"/>
    <property type="match status" value="1"/>
</dbReference>
<dbReference type="Pfam" id="PF00254">
    <property type="entry name" value="FKBP_C"/>
    <property type="match status" value="1"/>
</dbReference>
<dbReference type="Pfam" id="PF05698">
    <property type="entry name" value="Trigger_C"/>
    <property type="match status" value="1"/>
</dbReference>
<dbReference type="Pfam" id="PF05697">
    <property type="entry name" value="Trigger_N"/>
    <property type="match status" value="1"/>
</dbReference>
<dbReference type="PIRSF" id="PIRSF003095">
    <property type="entry name" value="Trigger_factor"/>
    <property type="match status" value="1"/>
</dbReference>
<dbReference type="SUPFAM" id="SSF54534">
    <property type="entry name" value="FKBP-like"/>
    <property type="match status" value="1"/>
</dbReference>
<dbReference type="SUPFAM" id="SSF109998">
    <property type="entry name" value="Triger factor/SurA peptide-binding domain-like"/>
    <property type="match status" value="1"/>
</dbReference>
<dbReference type="SUPFAM" id="SSF102735">
    <property type="entry name" value="Trigger factor ribosome-binding domain"/>
    <property type="match status" value="1"/>
</dbReference>
<dbReference type="PROSITE" id="PS50059">
    <property type="entry name" value="FKBP_PPIASE"/>
    <property type="match status" value="1"/>
</dbReference>
<organism>
    <name type="scientific">Leptothrix cholodnii (strain ATCC 51168 / LMG 8142 / SP-6)</name>
    <name type="common">Leptothrix discophora (strain SP-6)</name>
    <dbReference type="NCBI Taxonomy" id="395495"/>
    <lineage>
        <taxon>Bacteria</taxon>
        <taxon>Pseudomonadati</taxon>
        <taxon>Pseudomonadota</taxon>
        <taxon>Betaproteobacteria</taxon>
        <taxon>Burkholderiales</taxon>
        <taxon>Sphaerotilaceae</taxon>
        <taxon>Leptothrix</taxon>
    </lineage>
</organism>
<feature type="chain" id="PRO_1000115549" description="Trigger factor">
    <location>
        <begin position="1"/>
        <end position="435"/>
    </location>
</feature>
<feature type="domain" description="PPIase FKBP-type" evidence="1">
    <location>
        <begin position="163"/>
        <end position="248"/>
    </location>
</feature>
<comment type="function">
    <text evidence="1">Involved in protein export. Acts as a chaperone by maintaining the newly synthesized protein in an open conformation. Functions as a peptidyl-prolyl cis-trans isomerase.</text>
</comment>
<comment type="catalytic activity">
    <reaction evidence="1">
        <text>[protein]-peptidylproline (omega=180) = [protein]-peptidylproline (omega=0)</text>
        <dbReference type="Rhea" id="RHEA:16237"/>
        <dbReference type="Rhea" id="RHEA-COMP:10747"/>
        <dbReference type="Rhea" id="RHEA-COMP:10748"/>
        <dbReference type="ChEBI" id="CHEBI:83833"/>
        <dbReference type="ChEBI" id="CHEBI:83834"/>
        <dbReference type="EC" id="5.2.1.8"/>
    </reaction>
</comment>
<comment type="subcellular location">
    <subcellularLocation>
        <location>Cytoplasm</location>
    </subcellularLocation>
    <text evidence="1">About half TF is bound to the ribosome near the polypeptide exit tunnel while the other half is free in the cytoplasm.</text>
</comment>
<comment type="domain">
    <text evidence="1">Consists of 3 domains; the N-terminus binds the ribosome, the middle domain has PPIase activity, while the C-terminus has intrinsic chaperone activity on its own.</text>
</comment>
<comment type="similarity">
    <text evidence="1">Belongs to the FKBP-type PPIase family. Tig subfamily.</text>
</comment>
<gene>
    <name evidence="1" type="primary">tig</name>
    <name type="ordered locus">Lcho_2545</name>
</gene>
<evidence type="ECO:0000255" key="1">
    <source>
        <dbReference type="HAMAP-Rule" id="MF_00303"/>
    </source>
</evidence>